<feature type="chain" id="PRO_0000390714" description="Dual specificity tyrosine-phosphorylation-regulated kinase mbk-1">
    <location>
        <begin position="1"/>
        <end position="904"/>
    </location>
</feature>
<feature type="domain" description="Protein kinase" evidence="5">
    <location>
        <begin position="367"/>
        <end position="690"/>
    </location>
</feature>
<feature type="region of interest" description="Disordered" evidence="7">
    <location>
        <begin position="1"/>
        <end position="151"/>
    </location>
</feature>
<feature type="region of interest" description="Disordered" evidence="7">
    <location>
        <begin position="250"/>
        <end position="272"/>
    </location>
</feature>
<feature type="region of interest" description="Disordered" evidence="7">
    <location>
        <begin position="285"/>
        <end position="345"/>
    </location>
</feature>
<feature type="region of interest" description="Disordered" evidence="7">
    <location>
        <begin position="717"/>
        <end position="830"/>
    </location>
</feature>
<feature type="region of interest" description="Disordered" evidence="7">
    <location>
        <begin position="881"/>
        <end position="904"/>
    </location>
</feature>
<feature type="compositionally biased region" description="Polar residues" evidence="7">
    <location>
        <begin position="9"/>
        <end position="23"/>
    </location>
</feature>
<feature type="compositionally biased region" description="Low complexity" evidence="7">
    <location>
        <begin position="24"/>
        <end position="35"/>
    </location>
</feature>
<feature type="compositionally biased region" description="Basic and acidic residues" evidence="7">
    <location>
        <begin position="59"/>
        <end position="75"/>
    </location>
</feature>
<feature type="compositionally biased region" description="Low complexity" evidence="7">
    <location>
        <begin position="112"/>
        <end position="123"/>
    </location>
</feature>
<feature type="compositionally biased region" description="Polar residues" evidence="7">
    <location>
        <begin position="286"/>
        <end position="297"/>
    </location>
</feature>
<feature type="compositionally biased region" description="Polar residues" evidence="7">
    <location>
        <begin position="721"/>
        <end position="733"/>
    </location>
</feature>
<feature type="compositionally biased region" description="Low complexity" evidence="7">
    <location>
        <begin position="749"/>
        <end position="820"/>
    </location>
</feature>
<feature type="compositionally biased region" description="Polar residues" evidence="7">
    <location>
        <begin position="881"/>
        <end position="890"/>
    </location>
</feature>
<feature type="compositionally biased region" description="Basic and acidic residues" evidence="7">
    <location>
        <begin position="892"/>
        <end position="904"/>
    </location>
</feature>
<feature type="active site" description="Proton acceptor" evidence="5 6">
    <location>
        <position position="495"/>
    </location>
</feature>
<feature type="binding site" evidence="5">
    <location>
        <begin position="373"/>
        <end position="381"/>
    </location>
    <ligand>
        <name>ATP</name>
        <dbReference type="ChEBI" id="CHEBI:30616"/>
    </ligand>
</feature>
<feature type="binding site" evidence="5">
    <location>
        <position position="396"/>
    </location>
    <ligand>
        <name>ATP</name>
        <dbReference type="ChEBI" id="CHEBI:30616"/>
    </ligand>
</feature>
<keyword id="KW-0067">ATP-binding</keyword>
<keyword id="KW-0418">Kinase</keyword>
<keyword id="KW-0460">Magnesium</keyword>
<keyword id="KW-0547">Nucleotide-binding</keyword>
<keyword id="KW-0539">Nucleus</keyword>
<keyword id="KW-1185">Reference proteome</keyword>
<keyword id="KW-0723">Serine/threonine-protein kinase</keyword>
<keyword id="KW-0808">Transferase</keyword>
<keyword id="KW-0829">Tyrosine-protein kinase</keyword>
<sequence length="904" mass="102612">MNSGEKQDNLQAWGQQPSSSYSNTQQQHGQITGQIPLTITNQVEAHDNDFHMQDASNDELEKSKKIAEQPTEHPQQHHQQQPAVPRFPPQSRQPQAILRFPQPPITSINKANNSNSQNFFPQQEVLQSRPKKHRVSMTNAEAANTPGMPPEKLPAKKLSADSQRPLFRDSNVFQRSAGQFTNDNGPSSSSAIVGAPFDANSSSKPVHIQQFRNPNDAPVTKLTSDLIKTYKAINEKFQSFYLRKNVRRSTVGRHTSLDSSGKPKTGKEASSSDANLIETFSIHNAVPNTSSSGNQPHYDSHVNAPPLLDTNAPPTSTMVVPMRTETESQQQMRQKSSRGGPYNNGYDDQNYDYILKNGEIFDKRYVILSDTPVGKGSFGQVTKAYDTVTKEEVAIKIIKNKKTFFDQAQIEIHLLELTNAHDKDNKYNIVTLKGHFVHRAHLCLVFELLSYNLYDLLKNTNFRGVSLNLARKFAQQLGKTLLFLSSPELSIIHCDLKPENVLLVNAKRSQIRVIDFGSSCQTGHRIYQYIQSRFYRSPEVLLGIAYDTKIDMWSLGCILVEMHTGEPLFAGSSEVDQMMKIVEVLGMPPKEMLDIGPKTHKYFDKTEDGIYYCKKTRDGYRHTYKAPGARKLHEILGVTSGGPGGRRLGEPGHSVEDYSKFKDLIKRMLNFDPKQRILRTTLFPVSHTAYNQNLYHQQQIDQVPAVGSVYIEDNGMYRPVPTSSHPISVTSSFDDGDVIEIDPNRRRYSQQNYHNPNYQYSQQPQSSSQQQQQQYQQSQRAQLEKQQQLQQQQQQQQQQRQHLSHQPSQSVQQHSSSSSRSRPRQQDQAEWRTQLELEEAFKQRKAEEATAPRSLQYNPQQVVGVQLIKRVLISKLFQGSMSHGNVNAGSSRDMEKHDYPNNKL</sequence>
<organism>
    <name type="scientific">Caenorhabditis briggsae</name>
    <dbReference type="NCBI Taxonomy" id="6238"/>
    <lineage>
        <taxon>Eukaryota</taxon>
        <taxon>Metazoa</taxon>
        <taxon>Ecdysozoa</taxon>
        <taxon>Nematoda</taxon>
        <taxon>Chromadorea</taxon>
        <taxon>Rhabditida</taxon>
        <taxon>Rhabditina</taxon>
        <taxon>Rhabditomorpha</taxon>
        <taxon>Rhabditoidea</taxon>
        <taxon>Rhabditidae</taxon>
        <taxon>Peloderinae</taxon>
        <taxon>Caenorhabditis</taxon>
    </lineage>
</organism>
<proteinExistence type="inferred from homology"/>
<accession>A8X4H1</accession>
<protein>
    <recommendedName>
        <fullName evidence="1">Dual specificity tyrosine-phosphorylation-regulated kinase mbk-1</fullName>
        <ecNumber evidence="3">2.7.12.1</ecNumber>
    </recommendedName>
    <alternativeName>
        <fullName evidence="1">Dual specificity Yak1-related kinase mbk-1</fullName>
    </alternativeName>
    <alternativeName>
        <fullName evidence="3">Minibrain Kinase 1</fullName>
    </alternativeName>
</protein>
<name>MBK1_CAEBR</name>
<comment type="function">
    <text evidence="2">Possible role in the function of olfactory neurons.</text>
</comment>
<comment type="catalytic activity">
    <reaction evidence="3">
        <text>L-seryl-[protein] + ATP = O-phospho-L-seryl-[protein] + ADP + H(+)</text>
        <dbReference type="Rhea" id="RHEA:17989"/>
        <dbReference type="Rhea" id="RHEA-COMP:9863"/>
        <dbReference type="Rhea" id="RHEA-COMP:11604"/>
        <dbReference type="ChEBI" id="CHEBI:15378"/>
        <dbReference type="ChEBI" id="CHEBI:29999"/>
        <dbReference type="ChEBI" id="CHEBI:30616"/>
        <dbReference type="ChEBI" id="CHEBI:83421"/>
        <dbReference type="ChEBI" id="CHEBI:456216"/>
        <dbReference type="EC" id="2.7.12.1"/>
    </reaction>
</comment>
<comment type="catalytic activity">
    <reaction evidence="3">
        <text>L-threonyl-[protein] + ATP = O-phospho-L-threonyl-[protein] + ADP + H(+)</text>
        <dbReference type="Rhea" id="RHEA:46608"/>
        <dbReference type="Rhea" id="RHEA-COMP:11060"/>
        <dbReference type="Rhea" id="RHEA-COMP:11605"/>
        <dbReference type="ChEBI" id="CHEBI:15378"/>
        <dbReference type="ChEBI" id="CHEBI:30013"/>
        <dbReference type="ChEBI" id="CHEBI:30616"/>
        <dbReference type="ChEBI" id="CHEBI:61977"/>
        <dbReference type="ChEBI" id="CHEBI:456216"/>
        <dbReference type="EC" id="2.7.12.1"/>
    </reaction>
</comment>
<comment type="catalytic activity">
    <reaction evidence="3">
        <text>L-tyrosyl-[protein] + ATP = O-phospho-L-tyrosyl-[protein] + ADP + H(+)</text>
        <dbReference type="Rhea" id="RHEA:10596"/>
        <dbReference type="Rhea" id="RHEA-COMP:10136"/>
        <dbReference type="Rhea" id="RHEA-COMP:20101"/>
        <dbReference type="ChEBI" id="CHEBI:15378"/>
        <dbReference type="ChEBI" id="CHEBI:30616"/>
        <dbReference type="ChEBI" id="CHEBI:46858"/>
        <dbReference type="ChEBI" id="CHEBI:61978"/>
        <dbReference type="ChEBI" id="CHEBI:456216"/>
        <dbReference type="EC" id="2.7.12.1"/>
    </reaction>
</comment>
<comment type="cofactor">
    <cofactor evidence="3">
        <name>Mg(2+)</name>
        <dbReference type="ChEBI" id="CHEBI:18420"/>
    </cofactor>
</comment>
<comment type="subcellular location">
    <subcellularLocation>
        <location evidence="2">Nucleus</location>
    </subcellularLocation>
</comment>
<comment type="similarity">
    <text evidence="4">Belongs to the protein kinase superfamily. CMGC Ser/Thr protein kinase family. MNB/DYRK subfamily.</text>
</comment>
<reference evidence="8" key="1">
    <citation type="journal article" date="2003" name="PLoS Biol.">
        <title>The genome sequence of Caenorhabditis briggsae: a platform for comparative genomics.</title>
        <authorList>
            <person name="Stein L.D."/>
            <person name="Bao Z."/>
            <person name="Blasiar D."/>
            <person name="Blumenthal T."/>
            <person name="Brent M.R."/>
            <person name="Chen N."/>
            <person name="Chinwalla A."/>
            <person name="Clarke L."/>
            <person name="Clee C."/>
            <person name="Coghlan A."/>
            <person name="Coulson A."/>
            <person name="D'Eustachio P."/>
            <person name="Fitch D.H.A."/>
            <person name="Fulton L.A."/>
            <person name="Fulton R.E."/>
            <person name="Griffiths-Jones S."/>
            <person name="Harris T.W."/>
            <person name="Hillier L.W."/>
            <person name="Kamath R."/>
            <person name="Kuwabara P.E."/>
            <person name="Mardis E.R."/>
            <person name="Marra M.A."/>
            <person name="Miner T.L."/>
            <person name="Minx P."/>
            <person name="Mullikin J.C."/>
            <person name="Plumb R.W."/>
            <person name="Rogers J."/>
            <person name="Schein J.E."/>
            <person name="Sohrmann M."/>
            <person name="Spieth J."/>
            <person name="Stajich J.E."/>
            <person name="Wei C."/>
            <person name="Willey D."/>
            <person name="Wilson R.K."/>
            <person name="Durbin R.M."/>
            <person name="Waterston R.H."/>
        </authorList>
    </citation>
    <scope>NUCLEOTIDE SEQUENCE [LARGE SCALE GENOMIC DNA]</scope>
    <source>
        <strain evidence="8">AF16</strain>
    </source>
</reference>
<evidence type="ECO:0000250" key="1">
    <source>
        <dbReference type="UniProtKB" id="Q13627"/>
    </source>
</evidence>
<evidence type="ECO:0000250" key="2">
    <source>
        <dbReference type="UniProtKB" id="Q8WQL7"/>
    </source>
</evidence>
<evidence type="ECO:0000250" key="3">
    <source>
        <dbReference type="UniProtKB" id="Q9XTF3"/>
    </source>
</evidence>
<evidence type="ECO:0000255" key="4"/>
<evidence type="ECO:0000255" key="5">
    <source>
        <dbReference type="PROSITE-ProRule" id="PRU00159"/>
    </source>
</evidence>
<evidence type="ECO:0000255" key="6">
    <source>
        <dbReference type="PROSITE-ProRule" id="PRU10027"/>
    </source>
</evidence>
<evidence type="ECO:0000256" key="7">
    <source>
        <dbReference type="SAM" id="MobiDB-lite"/>
    </source>
</evidence>
<evidence type="ECO:0000312" key="8">
    <source>
        <dbReference type="EMBL" id="CAP27531.2"/>
    </source>
</evidence>
<gene>
    <name evidence="8" type="primary">mbk-1</name>
    <name type="ORF">CBG07597</name>
</gene>
<dbReference type="EC" id="2.7.12.1" evidence="3"/>
<dbReference type="EMBL" id="HE601041">
    <property type="protein sequence ID" value="CAP27531.2"/>
    <property type="molecule type" value="Genomic_DNA"/>
</dbReference>
<dbReference type="SMR" id="A8X4H1"/>
<dbReference type="FunCoup" id="A8X4H1">
    <property type="interactions" value="2326"/>
</dbReference>
<dbReference type="STRING" id="6238.A8X4H1"/>
<dbReference type="WormBase" id="CBG07597a">
    <property type="protein sequence ID" value="CBP40416"/>
    <property type="gene ID" value="WBGene00029589"/>
    <property type="gene designation" value="Cbr-mbk-1"/>
</dbReference>
<dbReference type="eggNOG" id="KOG0667">
    <property type="taxonomic scope" value="Eukaryota"/>
</dbReference>
<dbReference type="HOGENOM" id="CLU_014959_0_0_1"/>
<dbReference type="InParanoid" id="A8X4H1"/>
<dbReference type="OMA" id="DGIYYCK"/>
<dbReference type="Proteomes" id="UP000008549">
    <property type="component" value="Unassembled WGS sequence"/>
</dbReference>
<dbReference type="GO" id="GO:0005634">
    <property type="term" value="C:nucleus"/>
    <property type="evidence" value="ECO:0000318"/>
    <property type="project" value="GO_Central"/>
</dbReference>
<dbReference type="GO" id="GO:0005524">
    <property type="term" value="F:ATP binding"/>
    <property type="evidence" value="ECO:0007669"/>
    <property type="project" value="UniProtKB-KW"/>
</dbReference>
<dbReference type="GO" id="GO:0106310">
    <property type="term" value="F:protein serine kinase activity"/>
    <property type="evidence" value="ECO:0007669"/>
    <property type="project" value="RHEA"/>
</dbReference>
<dbReference type="GO" id="GO:0004674">
    <property type="term" value="F:protein serine/threonine kinase activity"/>
    <property type="evidence" value="ECO:0000318"/>
    <property type="project" value="GO_Central"/>
</dbReference>
<dbReference type="GO" id="GO:0004712">
    <property type="term" value="F:protein serine/threonine/tyrosine kinase activity"/>
    <property type="evidence" value="ECO:0007669"/>
    <property type="project" value="UniProtKB-EC"/>
</dbReference>
<dbReference type="GO" id="GO:0004713">
    <property type="term" value="F:protein tyrosine kinase activity"/>
    <property type="evidence" value="ECO:0007669"/>
    <property type="project" value="UniProtKB-KW"/>
</dbReference>
<dbReference type="GO" id="GO:0003713">
    <property type="term" value="F:transcription coactivator activity"/>
    <property type="evidence" value="ECO:0000318"/>
    <property type="project" value="GO_Central"/>
</dbReference>
<dbReference type="GO" id="GO:0045893">
    <property type="term" value="P:positive regulation of DNA-templated transcription"/>
    <property type="evidence" value="ECO:0000318"/>
    <property type="project" value="GO_Central"/>
</dbReference>
<dbReference type="CDD" id="cd14226">
    <property type="entry name" value="PKc_DYRK1"/>
    <property type="match status" value="1"/>
</dbReference>
<dbReference type="FunFam" id="3.30.200.20:FF:000087">
    <property type="entry name" value="Dual specificity tyrosine-phosphorylation-regulated kinase 1A"/>
    <property type="match status" value="1"/>
</dbReference>
<dbReference type="Gene3D" id="3.30.200.20">
    <property type="entry name" value="Phosphorylase Kinase, domain 1"/>
    <property type="match status" value="1"/>
</dbReference>
<dbReference type="Gene3D" id="1.10.510.10">
    <property type="entry name" value="Transferase(Phosphotransferase) domain 1"/>
    <property type="match status" value="1"/>
</dbReference>
<dbReference type="InterPro" id="IPR011009">
    <property type="entry name" value="Kinase-like_dom_sf"/>
</dbReference>
<dbReference type="InterPro" id="IPR044131">
    <property type="entry name" value="PKc_DYR1A/1B"/>
</dbReference>
<dbReference type="InterPro" id="IPR000719">
    <property type="entry name" value="Prot_kinase_dom"/>
</dbReference>
<dbReference type="InterPro" id="IPR017441">
    <property type="entry name" value="Protein_kinase_ATP_BS"/>
</dbReference>
<dbReference type="InterPro" id="IPR008271">
    <property type="entry name" value="Ser/Thr_kinase_AS"/>
</dbReference>
<dbReference type="InterPro" id="IPR050494">
    <property type="entry name" value="Ser_Thr_dual-spec_kinase"/>
</dbReference>
<dbReference type="PANTHER" id="PTHR24058">
    <property type="entry name" value="DUAL SPECIFICITY PROTEIN KINASE"/>
    <property type="match status" value="1"/>
</dbReference>
<dbReference type="PANTHER" id="PTHR24058:SF28">
    <property type="entry name" value="SERINE_THREONINE-PROTEIN KINASE MINIBRAIN"/>
    <property type="match status" value="1"/>
</dbReference>
<dbReference type="Pfam" id="PF00069">
    <property type="entry name" value="Pkinase"/>
    <property type="match status" value="1"/>
</dbReference>
<dbReference type="SMART" id="SM00220">
    <property type="entry name" value="S_TKc"/>
    <property type="match status" value="1"/>
</dbReference>
<dbReference type="SUPFAM" id="SSF56112">
    <property type="entry name" value="Protein kinase-like (PK-like)"/>
    <property type="match status" value="1"/>
</dbReference>
<dbReference type="PROSITE" id="PS00107">
    <property type="entry name" value="PROTEIN_KINASE_ATP"/>
    <property type="match status" value="1"/>
</dbReference>
<dbReference type="PROSITE" id="PS50011">
    <property type="entry name" value="PROTEIN_KINASE_DOM"/>
    <property type="match status" value="1"/>
</dbReference>
<dbReference type="PROSITE" id="PS00108">
    <property type="entry name" value="PROTEIN_KINASE_ST"/>
    <property type="match status" value="1"/>
</dbReference>